<name>ACPS_LEPIN</name>
<protein>
    <recommendedName>
        <fullName evidence="1">Holo-[acyl-carrier-protein] synthase</fullName>
        <shortName evidence="1">Holo-ACP synthase</shortName>
        <ecNumber evidence="1">2.7.8.7</ecNumber>
    </recommendedName>
    <alternativeName>
        <fullName evidence="1">4'-phosphopantetheinyl transferase AcpS</fullName>
    </alternativeName>
</protein>
<comment type="function">
    <text evidence="1">Transfers the 4'-phosphopantetheine moiety from coenzyme A to a Ser of acyl-carrier-protein.</text>
</comment>
<comment type="catalytic activity">
    <reaction evidence="1">
        <text>apo-[ACP] + CoA = holo-[ACP] + adenosine 3',5'-bisphosphate + H(+)</text>
        <dbReference type="Rhea" id="RHEA:12068"/>
        <dbReference type="Rhea" id="RHEA-COMP:9685"/>
        <dbReference type="Rhea" id="RHEA-COMP:9690"/>
        <dbReference type="ChEBI" id="CHEBI:15378"/>
        <dbReference type="ChEBI" id="CHEBI:29999"/>
        <dbReference type="ChEBI" id="CHEBI:57287"/>
        <dbReference type="ChEBI" id="CHEBI:58343"/>
        <dbReference type="ChEBI" id="CHEBI:64479"/>
        <dbReference type="EC" id="2.7.8.7"/>
    </reaction>
</comment>
<comment type="cofactor">
    <cofactor evidence="1">
        <name>Mg(2+)</name>
        <dbReference type="ChEBI" id="CHEBI:18420"/>
    </cofactor>
</comment>
<comment type="subcellular location">
    <subcellularLocation>
        <location evidence="1">Cytoplasm</location>
    </subcellularLocation>
</comment>
<comment type="similarity">
    <text evidence="1">Belongs to the P-Pant transferase superfamily. AcpS family.</text>
</comment>
<evidence type="ECO:0000255" key="1">
    <source>
        <dbReference type="HAMAP-Rule" id="MF_00101"/>
    </source>
</evidence>
<accession>Q8F136</accession>
<proteinExistence type="inferred from homology"/>
<feature type="chain" id="PRO_0000175662" description="Holo-[acyl-carrier-protein] synthase">
    <location>
        <begin position="1"/>
        <end position="126"/>
    </location>
</feature>
<feature type="binding site" evidence="1">
    <location>
        <position position="8"/>
    </location>
    <ligand>
        <name>Mg(2+)</name>
        <dbReference type="ChEBI" id="CHEBI:18420"/>
    </ligand>
</feature>
<feature type="binding site" evidence="1">
    <location>
        <position position="57"/>
    </location>
    <ligand>
        <name>Mg(2+)</name>
        <dbReference type="ChEBI" id="CHEBI:18420"/>
    </ligand>
</feature>
<keyword id="KW-0963">Cytoplasm</keyword>
<keyword id="KW-0275">Fatty acid biosynthesis</keyword>
<keyword id="KW-0276">Fatty acid metabolism</keyword>
<keyword id="KW-0444">Lipid biosynthesis</keyword>
<keyword id="KW-0443">Lipid metabolism</keyword>
<keyword id="KW-0460">Magnesium</keyword>
<keyword id="KW-0479">Metal-binding</keyword>
<keyword id="KW-1185">Reference proteome</keyword>
<keyword id="KW-0808">Transferase</keyword>
<sequence>MKISVGNDIVENSRIRDLLEKHGDRFLKRVFSESEREYCSNRKDPIPHLSGRFCVKEAFIKAIEPGDHVILDMREIELFGKEFGKKELVLHGKSKELFLTKGYSGCSVSISHAENYSTAVVVLYKE</sequence>
<dbReference type="EC" id="2.7.8.7" evidence="1"/>
<dbReference type="EMBL" id="AE010300">
    <property type="protein sequence ID" value="AAN50500.1"/>
    <property type="molecule type" value="Genomic_DNA"/>
</dbReference>
<dbReference type="RefSeq" id="NP_713482.1">
    <property type="nucleotide sequence ID" value="NC_004342.2"/>
</dbReference>
<dbReference type="RefSeq" id="WP_000704154.1">
    <property type="nucleotide sequence ID" value="NC_004342.2"/>
</dbReference>
<dbReference type="SMR" id="Q8F136"/>
<dbReference type="FunCoup" id="Q8F136">
    <property type="interactions" value="130"/>
</dbReference>
<dbReference type="STRING" id="189518.LA_3302"/>
<dbReference type="PaxDb" id="189518-LA_3302"/>
<dbReference type="EnsemblBacteria" id="AAN50500">
    <property type="protein sequence ID" value="AAN50500"/>
    <property type="gene ID" value="LA_3302"/>
</dbReference>
<dbReference type="GeneID" id="61144178"/>
<dbReference type="KEGG" id="lil:LA_3302"/>
<dbReference type="PATRIC" id="fig|189518.3.peg.3271"/>
<dbReference type="HOGENOM" id="CLU_089696_0_2_12"/>
<dbReference type="InParanoid" id="Q8F136"/>
<dbReference type="OrthoDB" id="517356at2"/>
<dbReference type="Proteomes" id="UP000001408">
    <property type="component" value="Chromosome I"/>
</dbReference>
<dbReference type="GO" id="GO:0005737">
    <property type="term" value="C:cytoplasm"/>
    <property type="evidence" value="ECO:0007669"/>
    <property type="project" value="UniProtKB-SubCell"/>
</dbReference>
<dbReference type="GO" id="GO:0008897">
    <property type="term" value="F:holo-[acyl-carrier-protein] synthase activity"/>
    <property type="evidence" value="ECO:0007669"/>
    <property type="project" value="UniProtKB-UniRule"/>
</dbReference>
<dbReference type="GO" id="GO:0000287">
    <property type="term" value="F:magnesium ion binding"/>
    <property type="evidence" value="ECO:0007669"/>
    <property type="project" value="UniProtKB-UniRule"/>
</dbReference>
<dbReference type="GO" id="GO:0006633">
    <property type="term" value="P:fatty acid biosynthetic process"/>
    <property type="evidence" value="ECO:0007669"/>
    <property type="project" value="UniProtKB-UniRule"/>
</dbReference>
<dbReference type="Gene3D" id="3.90.470.20">
    <property type="entry name" value="4'-phosphopantetheinyl transferase domain"/>
    <property type="match status" value="1"/>
</dbReference>
<dbReference type="HAMAP" id="MF_00101">
    <property type="entry name" value="AcpS"/>
    <property type="match status" value="1"/>
</dbReference>
<dbReference type="InterPro" id="IPR008278">
    <property type="entry name" value="4-PPantetheinyl_Trfase_dom"/>
</dbReference>
<dbReference type="InterPro" id="IPR037143">
    <property type="entry name" value="4-PPantetheinyl_Trfase_dom_sf"/>
</dbReference>
<dbReference type="InterPro" id="IPR002582">
    <property type="entry name" value="ACPS"/>
</dbReference>
<dbReference type="InterPro" id="IPR004568">
    <property type="entry name" value="Ppantetheine-prot_Trfase_dom"/>
</dbReference>
<dbReference type="NCBIfam" id="TIGR00516">
    <property type="entry name" value="acpS"/>
    <property type="match status" value="1"/>
</dbReference>
<dbReference type="NCBIfam" id="TIGR00556">
    <property type="entry name" value="pantethn_trn"/>
    <property type="match status" value="1"/>
</dbReference>
<dbReference type="Pfam" id="PF01648">
    <property type="entry name" value="ACPS"/>
    <property type="match status" value="1"/>
</dbReference>
<dbReference type="SUPFAM" id="SSF56214">
    <property type="entry name" value="4'-phosphopantetheinyl transferase"/>
    <property type="match status" value="1"/>
</dbReference>
<gene>
    <name evidence="1" type="primary">acpS</name>
    <name type="ordered locus">LA_3302</name>
</gene>
<organism>
    <name type="scientific">Leptospira interrogans serogroup Icterohaemorrhagiae serovar Lai (strain 56601)</name>
    <dbReference type="NCBI Taxonomy" id="189518"/>
    <lineage>
        <taxon>Bacteria</taxon>
        <taxon>Pseudomonadati</taxon>
        <taxon>Spirochaetota</taxon>
        <taxon>Spirochaetia</taxon>
        <taxon>Leptospirales</taxon>
        <taxon>Leptospiraceae</taxon>
        <taxon>Leptospira</taxon>
    </lineage>
</organism>
<reference key="1">
    <citation type="journal article" date="2003" name="Nature">
        <title>Unique physiological and pathogenic features of Leptospira interrogans revealed by whole-genome sequencing.</title>
        <authorList>
            <person name="Ren S.-X."/>
            <person name="Fu G."/>
            <person name="Jiang X.-G."/>
            <person name="Zeng R."/>
            <person name="Miao Y.-G."/>
            <person name="Xu H."/>
            <person name="Zhang Y.-X."/>
            <person name="Xiong H."/>
            <person name="Lu G."/>
            <person name="Lu L.-F."/>
            <person name="Jiang H.-Q."/>
            <person name="Jia J."/>
            <person name="Tu Y.-F."/>
            <person name="Jiang J.-X."/>
            <person name="Gu W.-Y."/>
            <person name="Zhang Y.-Q."/>
            <person name="Cai Z."/>
            <person name="Sheng H.-H."/>
            <person name="Yin H.-F."/>
            <person name="Zhang Y."/>
            <person name="Zhu G.-F."/>
            <person name="Wan M."/>
            <person name="Huang H.-L."/>
            <person name="Qian Z."/>
            <person name="Wang S.-Y."/>
            <person name="Ma W."/>
            <person name="Yao Z.-J."/>
            <person name="Shen Y."/>
            <person name="Qiang B.-Q."/>
            <person name="Xia Q.-C."/>
            <person name="Guo X.-K."/>
            <person name="Danchin A."/>
            <person name="Saint Girons I."/>
            <person name="Somerville R.L."/>
            <person name="Wen Y.-M."/>
            <person name="Shi M.-H."/>
            <person name="Chen Z."/>
            <person name="Xu J.-G."/>
            <person name="Zhao G.-P."/>
        </authorList>
    </citation>
    <scope>NUCLEOTIDE SEQUENCE [LARGE SCALE GENOMIC DNA]</scope>
    <source>
        <strain>56601</strain>
    </source>
</reference>